<name>Y098_MYCSK</name>
<dbReference type="EC" id="2.1.1.-"/>
<dbReference type="EMBL" id="CP000518">
    <property type="protein sequence ID" value="ABL89317.1"/>
    <property type="molecule type" value="Genomic_DNA"/>
</dbReference>
<dbReference type="SMR" id="A1U909"/>
<dbReference type="STRING" id="189918.Mkms_0098"/>
<dbReference type="KEGG" id="mkm:Mkms_0098"/>
<dbReference type="HOGENOM" id="CLU_056160_2_0_11"/>
<dbReference type="OrthoDB" id="9806164at2"/>
<dbReference type="GO" id="GO:0008168">
    <property type="term" value="F:methyltransferase activity"/>
    <property type="evidence" value="ECO:0007669"/>
    <property type="project" value="UniProtKB-KW"/>
</dbReference>
<dbReference type="GO" id="GO:0032259">
    <property type="term" value="P:methylation"/>
    <property type="evidence" value="ECO:0007669"/>
    <property type="project" value="UniProtKB-KW"/>
</dbReference>
<dbReference type="Gene3D" id="3.40.50.150">
    <property type="entry name" value="Vaccinia Virus protein VP39"/>
    <property type="match status" value="1"/>
</dbReference>
<dbReference type="InterPro" id="IPR007213">
    <property type="entry name" value="Ppm1/Ppm2/Tcmp"/>
</dbReference>
<dbReference type="InterPro" id="IPR029063">
    <property type="entry name" value="SAM-dependent_MTases_sf"/>
</dbReference>
<dbReference type="InterPro" id="IPR011610">
    <property type="entry name" value="SAM_mthyl_Trfase_ML2640-like"/>
</dbReference>
<dbReference type="NCBIfam" id="TIGR00027">
    <property type="entry name" value="mthyl_TIGR00027"/>
    <property type="match status" value="1"/>
</dbReference>
<dbReference type="PANTHER" id="PTHR43619">
    <property type="entry name" value="S-ADENOSYL-L-METHIONINE-DEPENDENT METHYLTRANSFERASE YKTD-RELATED"/>
    <property type="match status" value="1"/>
</dbReference>
<dbReference type="PANTHER" id="PTHR43619:SF2">
    <property type="entry name" value="S-ADENOSYL-L-METHIONINE-DEPENDENT METHYLTRANSFERASES SUPERFAMILY PROTEIN"/>
    <property type="match status" value="1"/>
</dbReference>
<dbReference type="Pfam" id="PF04072">
    <property type="entry name" value="LCM"/>
    <property type="match status" value="1"/>
</dbReference>
<dbReference type="SUPFAM" id="SSF53335">
    <property type="entry name" value="S-adenosyl-L-methionine-dependent methyltransferases"/>
    <property type="match status" value="1"/>
</dbReference>
<proteinExistence type="inferred from homology"/>
<gene>
    <name type="ordered locus">Mkms_0098</name>
</gene>
<evidence type="ECO:0000250" key="1"/>
<evidence type="ECO:0000305" key="2"/>
<reference key="1">
    <citation type="submission" date="2006-12" db="EMBL/GenBank/DDBJ databases">
        <title>Complete sequence of chromosome of Mycobacterium sp. KMS.</title>
        <authorList>
            <consortium name="US DOE Joint Genome Institute"/>
            <person name="Copeland A."/>
            <person name="Lucas S."/>
            <person name="Lapidus A."/>
            <person name="Barry K."/>
            <person name="Detter J.C."/>
            <person name="Glavina del Rio T."/>
            <person name="Hammon N."/>
            <person name="Israni S."/>
            <person name="Dalin E."/>
            <person name="Tice H."/>
            <person name="Pitluck S."/>
            <person name="Kiss H."/>
            <person name="Brettin T."/>
            <person name="Bruce D."/>
            <person name="Han C."/>
            <person name="Tapia R."/>
            <person name="Gilna P."/>
            <person name="Schmutz J."/>
            <person name="Larimer F."/>
            <person name="Land M."/>
            <person name="Hauser L."/>
            <person name="Kyrpides N."/>
            <person name="Mikhailova N."/>
            <person name="Miller C.D."/>
            <person name="Richardson P."/>
        </authorList>
    </citation>
    <scope>NUCLEOTIDE SEQUENCE [LARGE SCALE GENOMIC DNA]</scope>
    <source>
        <strain>KMS</strain>
    </source>
</reference>
<sequence>MRRQEAGTSSLATRVGPEVLTTAAVASVTGCDDPLAAVLLGRPKVIEVLQRSAELIDRVPALAAAHHQIADYHAMRSRFFDAYLADAAAEGIRQCVVLAAGLDTRAFRLPWPDGMTVFEIDQPTVLRYKENALTAHGARPAADWHPVGVESDMPWPRRLWESGFNHNEPTIWLAEGLLPLPDATQDALISEIDGLSAAGSRIAFDDVLGMCSGRSDAPGWLTSRGWWTDVVEARHLPELSGRRDDDAQSYTAHAALVTAEKIA</sequence>
<comment type="function">
    <text evidence="1">Exhibits S-adenosyl-L-methionine-dependent methyltransferase activity.</text>
</comment>
<comment type="similarity">
    <text evidence="2">Belongs to the UPF0677 family.</text>
</comment>
<organism>
    <name type="scientific">Mycobacterium sp. (strain KMS)</name>
    <dbReference type="NCBI Taxonomy" id="189918"/>
    <lineage>
        <taxon>Bacteria</taxon>
        <taxon>Bacillati</taxon>
        <taxon>Actinomycetota</taxon>
        <taxon>Actinomycetes</taxon>
        <taxon>Mycobacteriales</taxon>
        <taxon>Mycobacteriaceae</taxon>
        <taxon>Mycobacterium</taxon>
    </lineage>
</organism>
<feature type="chain" id="PRO_0000361209" description="Putative S-adenosyl-L-methionine-dependent methyltransferase Mkms_0098">
    <location>
        <begin position="1"/>
        <end position="263"/>
    </location>
</feature>
<feature type="binding site" evidence="1">
    <location>
        <position position="121"/>
    </location>
    <ligand>
        <name>S-adenosyl-L-methionine</name>
        <dbReference type="ChEBI" id="CHEBI:59789"/>
    </ligand>
</feature>
<feature type="binding site" evidence="1">
    <location>
        <begin position="150"/>
        <end position="151"/>
    </location>
    <ligand>
        <name>S-adenosyl-L-methionine</name>
        <dbReference type="ChEBI" id="CHEBI:59789"/>
    </ligand>
</feature>
<keyword id="KW-0489">Methyltransferase</keyword>
<keyword id="KW-0949">S-adenosyl-L-methionine</keyword>
<keyword id="KW-0808">Transferase</keyword>
<accession>A1U909</accession>
<protein>
    <recommendedName>
        <fullName>Putative S-adenosyl-L-methionine-dependent methyltransferase Mkms_0098</fullName>
        <ecNumber>2.1.1.-</ecNumber>
    </recommendedName>
</protein>